<keyword id="KW-0227">DNA damage</keyword>
<keyword id="KW-0233">DNA recombination</keyword>
<keyword id="KW-0234">DNA repair</keyword>
<keyword id="KW-0479">Metal-binding</keyword>
<keyword id="KW-1185">Reference proteome</keyword>
<keyword id="KW-0862">Zinc</keyword>
<keyword id="KW-0863">Zinc-finger</keyword>
<gene>
    <name evidence="1" type="primary">recR</name>
    <name type="ordered locus">LSEI_2261</name>
</gene>
<organism>
    <name type="scientific">Lacticaseibacillus paracasei (strain ATCC 334 / BCRC 17002 / CCUG 31169 / CIP 107868 / KCTC 3260 / NRRL B-441)</name>
    <name type="common">Lactobacillus paracasei</name>
    <dbReference type="NCBI Taxonomy" id="321967"/>
    <lineage>
        <taxon>Bacteria</taxon>
        <taxon>Bacillati</taxon>
        <taxon>Bacillota</taxon>
        <taxon>Bacilli</taxon>
        <taxon>Lactobacillales</taxon>
        <taxon>Lactobacillaceae</taxon>
        <taxon>Lacticaseibacillus</taxon>
    </lineage>
</organism>
<protein>
    <recommendedName>
        <fullName evidence="1">Recombination protein RecR</fullName>
    </recommendedName>
</protein>
<name>RECR_LACP3</name>
<comment type="function">
    <text evidence="1">May play a role in DNA repair. It seems to be involved in an RecBC-independent recombinational process of DNA repair. It may act with RecF and RecO.</text>
</comment>
<comment type="similarity">
    <text evidence="1">Belongs to the RecR family.</text>
</comment>
<evidence type="ECO:0000255" key="1">
    <source>
        <dbReference type="HAMAP-Rule" id="MF_00017"/>
    </source>
</evidence>
<sequence>MQYPEPISKLIDSYMRLPGIGAKTATRLAFYTIDMNKDDVTAFAKSLVAAKEDLHYCSICGNITDEDPCAICRDKSRDQSTILVVEQPKDVMSIDRAQDYHGLYHVLHGVLSPIEGRGPEDLNIESLLKRLKANKAVKEVIIATNATPEGEATAQYLARLIKPAGIKVTRLAHGLSVGSDIEYADEMTLMKAVEGRTEL</sequence>
<feature type="chain" id="PRO_1000001555" description="Recombination protein RecR">
    <location>
        <begin position="1"/>
        <end position="199"/>
    </location>
</feature>
<feature type="domain" description="Toprim" evidence="1">
    <location>
        <begin position="80"/>
        <end position="176"/>
    </location>
</feature>
<feature type="zinc finger region" description="C4-type" evidence="1">
    <location>
        <begin position="57"/>
        <end position="72"/>
    </location>
</feature>
<dbReference type="EMBL" id="CP000423">
    <property type="protein sequence ID" value="ABJ71005.1"/>
    <property type="molecule type" value="Genomic_DNA"/>
</dbReference>
<dbReference type="RefSeq" id="WP_003567101.1">
    <property type="nucleotide sequence ID" value="NC_008526.1"/>
</dbReference>
<dbReference type="RefSeq" id="YP_807447.1">
    <property type="nucleotide sequence ID" value="NC_008526.1"/>
</dbReference>
<dbReference type="SMR" id="Q035W7"/>
<dbReference type="STRING" id="321967.LSEI_2261"/>
<dbReference type="PaxDb" id="321967-LSEI_2261"/>
<dbReference type="KEGG" id="lca:LSEI_2261"/>
<dbReference type="PATRIC" id="fig|321967.11.peg.2224"/>
<dbReference type="HOGENOM" id="CLU_060739_1_0_9"/>
<dbReference type="Proteomes" id="UP000001651">
    <property type="component" value="Chromosome"/>
</dbReference>
<dbReference type="GO" id="GO:0003677">
    <property type="term" value="F:DNA binding"/>
    <property type="evidence" value="ECO:0007669"/>
    <property type="project" value="UniProtKB-UniRule"/>
</dbReference>
<dbReference type="GO" id="GO:0008270">
    <property type="term" value="F:zinc ion binding"/>
    <property type="evidence" value="ECO:0007669"/>
    <property type="project" value="UniProtKB-KW"/>
</dbReference>
<dbReference type="GO" id="GO:0006310">
    <property type="term" value="P:DNA recombination"/>
    <property type="evidence" value="ECO:0007669"/>
    <property type="project" value="UniProtKB-UniRule"/>
</dbReference>
<dbReference type="GO" id="GO:0006281">
    <property type="term" value="P:DNA repair"/>
    <property type="evidence" value="ECO:0007669"/>
    <property type="project" value="UniProtKB-UniRule"/>
</dbReference>
<dbReference type="CDD" id="cd01025">
    <property type="entry name" value="TOPRIM_recR"/>
    <property type="match status" value="1"/>
</dbReference>
<dbReference type="Gene3D" id="3.30.60.80">
    <property type="match status" value="1"/>
</dbReference>
<dbReference type="Gene3D" id="3.40.1360.10">
    <property type="match status" value="1"/>
</dbReference>
<dbReference type="Gene3D" id="6.10.250.240">
    <property type="match status" value="1"/>
</dbReference>
<dbReference type="Gene3D" id="1.10.8.420">
    <property type="entry name" value="RecR Domain 1"/>
    <property type="match status" value="1"/>
</dbReference>
<dbReference type="HAMAP" id="MF_00017">
    <property type="entry name" value="RecR"/>
    <property type="match status" value="1"/>
</dbReference>
<dbReference type="InterPro" id="IPR000093">
    <property type="entry name" value="DNA_Rcmb_RecR"/>
</dbReference>
<dbReference type="InterPro" id="IPR023627">
    <property type="entry name" value="Rcmb_RecR"/>
</dbReference>
<dbReference type="InterPro" id="IPR015967">
    <property type="entry name" value="Rcmb_RecR_Znf"/>
</dbReference>
<dbReference type="InterPro" id="IPR006171">
    <property type="entry name" value="TOPRIM_dom"/>
</dbReference>
<dbReference type="InterPro" id="IPR034137">
    <property type="entry name" value="TOPRIM_RecR"/>
</dbReference>
<dbReference type="NCBIfam" id="TIGR00615">
    <property type="entry name" value="recR"/>
    <property type="match status" value="1"/>
</dbReference>
<dbReference type="PANTHER" id="PTHR30446">
    <property type="entry name" value="RECOMBINATION PROTEIN RECR"/>
    <property type="match status" value="1"/>
</dbReference>
<dbReference type="PANTHER" id="PTHR30446:SF0">
    <property type="entry name" value="RECOMBINATION PROTEIN RECR"/>
    <property type="match status" value="1"/>
</dbReference>
<dbReference type="Pfam" id="PF21175">
    <property type="entry name" value="RecR_C"/>
    <property type="match status" value="1"/>
</dbReference>
<dbReference type="Pfam" id="PF21176">
    <property type="entry name" value="RecR_HhH"/>
    <property type="match status" value="1"/>
</dbReference>
<dbReference type="Pfam" id="PF02132">
    <property type="entry name" value="RecR_ZnF"/>
    <property type="match status" value="1"/>
</dbReference>
<dbReference type="Pfam" id="PF13662">
    <property type="entry name" value="Toprim_4"/>
    <property type="match status" value="1"/>
</dbReference>
<dbReference type="SMART" id="SM00493">
    <property type="entry name" value="TOPRIM"/>
    <property type="match status" value="1"/>
</dbReference>
<dbReference type="SUPFAM" id="SSF111304">
    <property type="entry name" value="Recombination protein RecR"/>
    <property type="match status" value="1"/>
</dbReference>
<dbReference type="PROSITE" id="PS01300">
    <property type="entry name" value="RECR"/>
    <property type="match status" value="1"/>
</dbReference>
<dbReference type="PROSITE" id="PS50880">
    <property type="entry name" value="TOPRIM"/>
    <property type="match status" value="1"/>
</dbReference>
<proteinExistence type="inferred from homology"/>
<reference key="1">
    <citation type="journal article" date="2006" name="Proc. Natl. Acad. Sci. U.S.A.">
        <title>Comparative genomics of the lactic acid bacteria.</title>
        <authorList>
            <person name="Makarova K.S."/>
            <person name="Slesarev A."/>
            <person name="Wolf Y.I."/>
            <person name="Sorokin A."/>
            <person name="Mirkin B."/>
            <person name="Koonin E.V."/>
            <person name="Pavlov A."/>
            <person name="Pavlova N."/>
            <person name="Karamychev V."/>
            <person name="Polouchine N."/>
            <person name="Shakhova V."/>
            <person name="Grigoriev I."/>
            <person name="Lou Y."/>
            <person name="Rohksar D."/>
            <person name="Lucas S."/>
            <person name="Huang K."/>
            <person name="Goodstein D.M."/>
            <person name="Hawkins T."/>
            <person name="Plengvidhya V."/>
            <person name="Welker D."/>
            <person name="Hughes J."/>
            <person name="Goh Y."/>
            <person name="Benson A."/>
            <person name="Baldwin K."/>
            <person name="Lee J.-H."/>
            <person name="Diaz-Muniz I."/>
            <person name="Dosti B."/>
            <person name="Smeianov V."/>
            <person name="Wechter W."/>
            <person name="Barabote R."/>
            <person name="Lorca G."/>
            <person name="Altermann E."/>
            <person name="Barrangou R."/>
            <person name="Ganesan B."/>
            <person name="Xie Y."/>
            <person name="Rawsthorne H."/>
            <person name="Tamir D."/>
            <person name="Parker C."/>
            <person name="Breidt F."/>
            <person name="Broadbent J.R."/>
            <person name="Hutkins R."/>
            <person name="O'Sullivan D."/>
            <person name="Steele J."/>
            <person name="Unlu G."/>
            <person name="Saier M.H. Jr."/>
            <person name="Klaenhammer T."/>
            <person name="Richardson P."/>
            <person name="Kozyavkin S."/>
            <person name="Weimer B.C."/>
            <person name="Mills D.A."/>
        </authorList>
    </citation>
    <scope>NUCLEOTIDE SEQUENCE [LARGE SCALE GENOMIC DNA]</scope>
    <source>
        <strain>ATCC 334 / BCRC 17002 / CCUG 31169 / CIP 107868 / KCTC 3260 / NRRL B-441</strain>
    </source>
</reference>
<accession>Q035W7</accession>